<name>PRR9_BOVIN</name>
<dbReference type="EMBL" id="BC149073">
    <property type="protein sequence ID" value="AAI49074.1"/>
    <property type="status" value="ALT_INIT"/>
    <property type="molecule type" value="mRNA"/>
</dbReference>
<dbReference type="RefSeq" id="XP_002686070.2">
    <property type="nucleotide sequence ID" value="XM_002686024.6"/>
</dbReference>
<dbReference type="RefSeq" id="XP_002703896.3">
    <property type="nucleotide sequence ID" value="XM_002703850.4"/>
</dbReference>
<dbReference type="SwissPalm" id="A6QNZ4"/>
<dbReference type="Ensembl" id="ENSBTAT00000072986.2">
    <property type="protein sequence ID" value="ENSBTAP00000076967.1"/>
    <property type="gene ID" value="ENSBTAG00000050666.2"/>
</dbReference>
<dbReference type="GeneID" id="100296489"/>
<dbReference type="KEGG" id="bta:100296489"/>
<dbReference type="CTD" id="574414"/>
<dbReference type="GeneTree" id="ENSGT00700000104637"/>
<dbReference type="InParanoid" id="A6QNZ4"/>
<dbReference type="OrthoDB" id="9835460at2759"/>
<dbReference type="Proteomes" id="UP000009136">
    <property type="component" value="Chromosome 3"/>
</dbReference>
<dbReference type="InterPro" id="IPR052888">
    <property type="entry name" value="PRR9"/>
</dbReference>
<dbReference type="PANTHER" id="PTHR48427">
    <property type="entry name" value="PROLINE-RICH PROTEIN 9"/>
    <property type="match status" value="1"/>
</dbReference>
<dbReference type="PANTHER" id="PTHR48427:SF1">
    <property type="entry name" value="PROLINE-RICH PROTEIN 9"/>
    <property type="match status" value="1"/>
</dbReference>
<dbReference type="PRINTS" id="PR00021">
    <property type="entry name" value="PRORICH"/>
</dbReference>
<sequence length="116" mass="12851">MSFNEQQCKQPCVPPPCLQKTQEQCQAKAEEVCLPPCQDPCQEKCPTKVQEVCVPQCQALSQDNCPQQSQDPCLPLCPDQCPSQCTEPCQELSQTKCVEVCPQKIQEKCLPPGKGK</sequence>
<accession>A6QNZ4</accession>
<organism>
    <name type="scientific">Bos taurus</name>
    <name type="common">Bovine</name>
    <dbReference type="NCBI Taxonomy" id="9913"/>
    <lineage>
        <taxon>Eukaryota</taxon>
        <taxon>Metazoa</taxon>
        <taxon>Chordata</taxon>
        <taxon>Craniata</taxon>
        <taxon>Vertebrata</taxon>
        <taxon>Euteleostomi</taxon>
        <taxon>Mammalia</taxon>
        <taxon>Eutheria</taxon>
        <taxon>Laurasiatheria</taxon>
        <taxon>Artiodactyla</taxon>
        <taxon>Ruminantia</taxon>
        <taxon>Pecora</taxon>
        <taxon>Bovidae</taxon>
        <taxon>Bovinae</taxon>
        <taxon>Bos</taxon>
    </lineage>
</organism>
<gene>
    <name type="primary">PRR9</name>
</gene>
<comment type="sequence caution" evidence="1">
    <conflict type="erroneous initiation">
        <sequence resource="EMBL-CDS" id="AAI49074"/>
    </conflict>
</comment>
<reference key="1">
    <citation type="submission" date="2007-07" db="EMBL/GenBank/DDBJ databases">
        <authorList>
            <consortium name="NIH - Mammalian Gene Collection (MGC) project"/>
        </authorList>
    </citation>
    <scope>NUCLEOTIDE SEQUENCE [LARGE SCALE MRNA]</scope>
    <source>
        <strain>Hereford</strain>
        <tissue>Fetal skin</tissue>
    </source>
</reference>
<protein>
    <recommendedName>
        <fullName>Proline-rich protein 9</fullName>
    </recommendedName>
</protein>
<feature type="chain" id="PRO_0000334687" description="Proline-rich protein 9">
    <location>
        <begin position="1"/>
        <end position="116"/>
    </location>
</feature>
<proteinExistence type="predicted"/>
<evidence type="ECO:0000305" key="1"/>
<keyword id="KW-1185">Reference proteome</keyword>